<dbReference type="EMBL" id="CU329670">
    <property type="protein sequence ID" value="CAB90137.1"/>
    <property type="status" value="ALT_SEQ"/>
    <property type="molecule type" value="Genomic_DNA"/>
</dbReference>
<dbReference type="RefSeq" id="NP_593878.1">
    <property type="nucleotide sequence ID" value="NM_001019308.2"/>
</dbReference>
<dbReference type="PDB" id="4H63">
    <property type="method" value="X-ray"/>
    <property type="resolution" value="3.40 A"/>
    <property type="chains" value="K=1-112"/>
</dbReference>
<dbReference type="PDB" id="5N9J">
    <property type="method" value="X-ray"/>
    <property type="resolution" value="3.40 A"/>
    <property type="chains" value="V=1-112"/>
</dbReference>
<dbReference type="PDB" id="5U0P">
    <property type="method" value="EM"/>
    <property type="resolution" value="4.40 A"/>
    <property type="chains" value="K=1-111"/>
</dbReference>
<dbReference type="PDB" id="5U0S">
    <property type="method" value="EM"/>
    <property type="resolution" value="7.80 A"/>
    <property type="chains" value="K=1-111"/>
</dbReference>
<dbReference type="PDBsum" id="4H63"/>
<dbReference type="PDBsum" id="5N9J"/>
<dbReference type="PDBsum" id="5U0P"/>
<dbReference type="PDBsum" id="5U0S"/>
<dbReference type="EMDB" id="EMD-8479"/>
<dbReference type="EMDB" id="EMD-8480"/>
<dbReference type="SMR" id="Q9P6Q0"/>
<dbReference type="DIP" id="DIP-60134N"/>
<dbReference type="FunCoup" id="Q9P6Q0">
    <property type="interactions" value="23"/>
</dbReference>
<dbReference type="IntAct" id="Q9P6Q0">
    <property type="interactions" value="7"/>
</dbReference>
<dbReference type="STRING" id="284812.Q9P6Q0"/>
<dbReference type="iPTMnet" id="Q9P6Q0"/>
<dbReference type="PaxDb" id="4896-SPAC644.10.1"/>
<dbReference type="GeneID" id="2543656"/>
<dbReference type="KEGG" id="spo:2543656"/>
<dbReference type="PomBase" id="SPAC644.10">
    <property type="gene designation" value="med11"/>
</dbReference>
<dbReference type="HOGENOM" id="CLU_2147321_0_0_1"/>
<dbReference type="InParanoid" id="Q9P6Q0"/>
<dbReference type="PRO" id="PR:Q9P6Q0"/>
<dbReference type="Proteomes" id="UP000002485">
    <property type="component" value="Chromosome I"/>
</dbReference>
<dbReference type="GO" id="GO:0005737">
    <property type="term" value="C:cytoplasm"/>
    <property type="evidence" value="ECO:0007669"/>
    <property type="project" value="UniProtKB-SubCell"/>
</dbReference>
<dbReference type="GO" id="GO:0016592">
    <property type="term" value="C:mediator complex"/>
    <property type="evidence" value="ECO:0000314"/>
    <property type="project" value="PomBase"/>
</dbReference>
<dbReference type="GO" id="GO:0005634">
    <property type="term" value="C:nucleus"/>
    <property type="evidence" value="ECO:0007005"/>
    <property type="project" value="PomBase"/>
</dbReference>
<dbReference type="GO" id="GO:0003713">
    <property type="term" value="F:transcription coactivator activity"/>
    <property type="evidence" value="ECO:0000266"/>
    <property type="project" value="PomBase"/>
</dbReference>
<dbReference type="GO" id="GO:0060261">
    <property type="term" value="P:positive regulation of transcription initiation by RNA polymerase II"/>
    <property type="evidence" value="ECO:0000269"/>
    <property type="project" value="PomBase"/>
</dbReference>
<dbReference type="FunFam" id="1.10.287.3490:FF:000007">
    <property type="entry name" value="Mediator of RNA polymerase II transcription subunit 11"/>
    <property type="match status" value="1"/>
</dbReference>
<dbReference type="Gene3D" id="1.10.287.3490">
    <property type="match status" value="1"/>
</dbReference>
<dbReference type="InterPro" id="IPR019404">
    <property type="entry name" value="Mediator_Med11"/>
</dbReference>
<dbReference type="Pfam" id="PF10280">
    <property type="entry name" value="Med11"/>
    <property type="match status" value="1"/>
</dbReference>
<feature type="chain" id="PRO_0000304078" description="Mediator of RNA polymerase II transcription subunit 11">
    <location>
        <begin position="1"/>
        <end position="112"/>
    </location>
</feature>
<feature type="helix" evidence="6">
    <location>
        <begin position="17"/>
        <end position="30"/>
    </location>
</feature>
<feature type="helix" evidence="6">
    <location>
        <begin position="33"/>
        <end position="46"/>
    </location>
</feature>
<feature type="helix" evidence="6">
    <location>
        <begin position="51"/>
        <end position="81"/>
    </location>
</feature>
<feature type="helix" evidence="6">
    <location>
        <begin position="98"/>
        <end position="110"/>
    </location>
</feature>
<comment type="function">
    <text evidence="2">Component of the Mediator complex, a coactivator involved in the regulated transcription of nearly all RNA polymerase II-dependent genes. Mediator functions as a bridge to convey information from gene-specific regulatory proteins to the basal RNA polymerase II transcription machinery. Mediator is recruited to promoters by direct interactions with regulatory proteins and serves as a scaffold for the assembly of a functional pre-initiation complex (PIC) with RNA polymerase II and the general transcription factors. The essential med11/22 heterodimer specifically functions in promoting stable PIC formation (By similarity).</text>
</comment>
<comment type="subunit">
    <text evidence="1 4">Component of the Mediator complex, which is composed of at least 21 subunits that form three structurally distinct submodules. The Mediator head module, the middle module, and the tail module. The head and the middle modules interact directly with RNA polymerase II, whereas the elongated tail module interacts with gene-specific regulatory proteins (By similarity). Med11 is part of the head module. Forms a heterodimer with med22. The med11/22 heterodimer binds to and stabilizes the central head subunit med17.</text>
</comment>
<comment type="subcellular location">
    <subcellularLocation>
        <location evidence="3">Cytoplasm</location>
    </subcellularLocation>
    <subcellularLocation>
        <location evidence="3">Nucleus</location>
    </subcellularLocation>
</comment>
<comment type="similarity">
    <text evidence="5">Belongs to the Mediator complex subunit 11 family.</text>
</comment>
<comment type="sequence caution" evidence="5">
    <conflict type="erroneous gene model prediction">
        <sequence resource="EMBL-CDS" id="CAB90137"/>
    </conflict>
</comment>
<sequence>MTNSDDDLFSEKSTSSDTQQVQNILELEAKIPDILSSAGKCIEAIQLNNSLEDFRKYSKEFLETVEFISTGLRRQALELEKAEVPVVSLQPKKRYASTPLSNLIFDQSSKLM</sequence>
<keyword id="KW-0002">3D-structure</keyword>
<keyword id="KW-0963">Cytoplasm</keyword>
<keyword id="KW-0539">Nucleus</keyword>
<keyword id="KW-1185">Reference proteome</keyword>
<accession>Q9P6Q0</accession>
<organism>
    <name type="scientific">Schizosaccharomyces pombe (strain 972 / ATCC 24843)</name>
    <name type="common">Fission yeast</name>
    <dbReference type="NCBI Taxonomy" id="284812"/>
    <lineage>
        <taxon>Eukaryota</taxon>
        <taxon>Fungi</taxon>
        <taxon>Dikarya</taxon>
        <taxon>Ascomycota</taxon>
        <taxon>Taphrinomycotina</taxon>
        <taxon>Schizosaccharomycetes</taxon>
        <taxon>Schizosaccharomycetales</taxon>
        <taxon>Schizosaccharomycetaceae</taxon>
        <taxon>Schizosaccharomyces</taxon>
    </lineage>
</organism>
<proteinExistence type="evidence at protein level"/>
<reference key="1">
    <citation type="journal article" date="2002" name="Nature">
        <title>The genome sequence of Schizosaccharomyces pombe.</title>
        <authorList>
            <person name="Wood V."/>
            <person name="Gwilliam R."/>
            <person name="Rajandream M.A."/>
            <person name="Lyne M.H."/>
            <person name="Lyne R."/>
            <person name="Stewart A."/>
            <person name="Sgouros J.G."/>
            <person name="Peat N."/>
            <person name="Hayles J."/>
            <person name="Baker S.G."/>
            <person name="Basham D."/>
            <person name="Bowman S."/>
            <person name="Brooks K."/>
            <person name="Brown D."/>
            <person name="Brown S."/>
            <person name="Chillingworth T."/>
            <person name="Churcher C.M."/>
            <person name="Collins M."/>
            <person name="Connor R."/>
            <person name="Cronin A."/>
            <person name="Davis P."/>
            <person name="Feltwell T."/>
            <person name="Fraser A."/>
            <person name="Gentles S."/>
            <person name="Goble A."/>
            <person name="Hamlin N."/>
            <person name="Harris D.E."/>
            <person name="Hidalgo J."/>
            <person name="Hodgson G."/>
            <person name="Holroyd S."/>
            <person name="Hornsby T."/>
            <person name="Howarth S."/>
            <person name="Huckle E.J."/>
            <person name="Hunt S."/>
            <person name="Jagels K."/>
            <person name="James K.D."/>
            <person name="Jones L."/>
            <person name="Jones M."/>
            <person name="Leather S."/>
            <person name="McDonald S."/>
            <person name="McLean J."/>
            <person name="Mooney P."/>
            <person name="Moule S."/>
            <person name="Mungall K.L."/>
            <person name="Murphy L.D."/>
            <person name="Niblett D."/>
            <person name="Odell C."/>
            <person name="Oliver K."/>
            <person name="O'Neil S."/>
            <person name="Pearson D."/>
            <person name="Quail M.A."/>
            <person name="Rabbinowitsch E."/>
            <person name="Rutherford K.M."/>
            <person name="Rutter S."/>
            <person name="Saunders D."/>
            <person name="Seeger K."/>
            <person name="Sharp S."/>
            <person name="Skelton J."/>
            <person name="Simmonds M.N."/>
            <person name="Squares R."/>
            <person name="Squares S."/>
            <person name="Stevens K."/>
            <person name="Taylor K."/>
            <person name="Taylor R.G."/>
            <person name="Tivey A."/>
            <person name="Walsh S.V."/>
            <person name="Warren T."/>
            <person name="Whitehead S."/>
            <person name="Woodward J.R."/>
            <person name="Volckaert G."/>
            <person name="Aert R."/>
            <person name="Robben J."/>
            <person name="Grymonprez B."/>
            <person name="Weltjens I."/>
            <person name="Vanstreels E."/>
            <person name="Rieger M."/>
            <person name="Schaefer M."/>
            <person name="Mueller-Auer S."/>
            <person name="Gabel C."/>
            <person name="Fuchs M."/>
            <person name="Duesterhoeft A."/>
            <person name="Fritzc C."/>
            <person name="Holzer E."/>
            <person name="Moestl D."/>
            <person name="Hilbert H."/>
            <person name="Borzym K."/>
            <person name="Langer I."/>
            <person name="Beck A."/>
            <person name="Lehrach H."/>
            <person name="Reinhardt R."/>
            <person name="Pohl T.M."/>
            <person name="Eger P."/>
            <person name="Zimmermann W."/>
            <person name="Wedler H."/>
            <person name="Wambutt R."/>
            <person name="Purnelle B."/>
            <person name="Goffeau A."/>
            <person name="Cadieu E."/>
            <person name="Dreano S."/>
            <person name="Gloux S."/>
            <person name="Lelaure V."/>
            <person name="Mottier S."/>
            <person name="Galibert F."/>
            <person name="Aves S.J."/>
            <person name="Xiang Z."/>
            <person name="Hunt C."/>
            <person name="Moore K."/>
            <person name="Hurst S.M."/>
            <person name="Lucas M."/>
            <person name="Rochet M."/>
            <person name="Gaillardin C."/>
            <person name="Tallada V.A."/>
            <person name="Garzon A."/>
            <person name="Thode G."/>
            <person name="Daga R.R."/>
            <person name="Cruzado L."/>
            <person name="Jimenez J."/>
            <person name="Sanchez M."/>
            <person name="del Rey F."/>
            <person name="Benito J."/>
            <person name="Dominguez A."/>
            <person name="Revuelta J.L."/>
            <person name="Moreno S."/>
            <person name="Armstrong J."/>
            <person name="Forsburg S.L."/>
            <person name="Cerutti L."/>
            <person name="Lowe T."/>
            <person name="McCombie W.R."/>
            <person name="Paulsen I."/>
            <person name="Potashkin J."/>
            <person name="Shpakovski G.V."/>
            <person name="Ussery D."/>
            <person name="Barrell B.G."/>
            <person name="Nurse P."/>
        </authorList>
    </citation>
    <scope>NUCLEOTIDE SEQUENCE [LARGE SCALE GENOMIC DNA]</scope>
    <source>
        <strain>972 / ATCC 24843</strain>
    </source>
</reference>
<reference key="2">
    <citation type="journal article" date="2006" name="Nat. Biotechnol.">
        <title>ORFeome cloning and global analysis of protein localization in the fission yeast Schizosaccharomyces pombe.</title>
        <authorList>
            <person name="Matsuyama A."/>
            <person name="Arai R."/>
            <person name="Yashiroda Y."/>
            <person name="Shirai A."/>
            <person name="Kamata A."/>
            <person name="Sekido S."/>
            <person name="Kobayashi Y."/>
            <person name="Hashimoto A."/>
            <person name="Hamamoto M."/>
            <person name="Hiraoka Y."/>
            <person name="Horinouchi S."/>
            <person name="Yoshida M."/>
        </authorList>
    </citation>
    <scope>SUBCELLULAR LOCATION [LARGE SCALE ANALYSIS]</scope>
</reference>
<reference key="3">
    <citation type="journal article" date="2011" name="Nucleic Acids Res.">
        <title>Mediator head subcomplex Med11/22 contains a common helix bundle building block with a specific function in transcription initiation complex stabilization.</title>
        <authorList>
            <person name="Seizl M."/>
            <person name="Lariviere L."/>
            <person name="Pfaffeneder T."/>
            <person name="Wenzeck L."/>
            <person name="Cramer P."/>
        </authorList>
    </citation>
    <scope>IDENTIFICATION</scope>
    <scope>REVISION OF GENE MODEL</scope>
    <scope>INTERACTION WITH MED22 AND MED17</scope>
</reference>
<evidence type="ECO:0000250" key="1"/>
<evidence type="ECO:0000250" key="2">
    <source>
        <dbReference type="UniProtKB" id="Q99278"/>
    </source>
</evidence>
<evidence type="ECO:0000269" key="3">
    <source>
    </source>
</evidence>
<evidence type="ECO:0000269" key="4">
    <source>
    </source>
</evidence>
<evidence type="ECO:0000305" key="5"/>
<evidence type="ECO:0007829" key="6">
    <source>
        <dbReference type="PDB" id="4H63"/>
    </source>
</evidence>
<protein>
    <recommendedName>
        <fullName>Mediator of RNA polymerase II transcription subunit 11</fullName>
    </recommendedName>
    <alternativeName>
        <fullName>Mediator complex subunit 11</fullName>
    </alternativeName>
</protein>
<gene>
    <name type="primary">med11</name>
    <name type="ORF">SPAC644.10</name>
</gene>
<name>MED11_SCHPO</name>